<protein>
    <recommendedName>
        <fullName>HTH-type transcriptional regulator SarZ</fullName>
    </recommendedName>
    <alternativeName>
        <fullName>Staphylococcal accessory regulator Z</fullName>
    </alternativeName>
</protein>
<sequence>MEEKDNTLERQLCFLFYVSSKEIIKKYTSYLKEFDLTYTGYIVLLAIGVEEKLNIKTLGARVFLDSGTLTPLLKKLEKKGYVTRTREIDDERNLQIALTTKGKDIKEPLSNISKQVFNEFDMEVDEAIDLKETLQNFVNKHFQQNI</sequence>
<proteinExistence type="inferred from homology"/>
<keyword id="KW-0963">Cytoplasm</keyword>
<keyword id="KW-0238">DNA-binding</keyword>
<keyword id="KW-1185">Reference proteome</keyword>
<keyword id="KW-0804">Transcription</keyword>
<keyword id="KW-0805">Transcription regulation</keyword>
<reference key="1">
    <citation type="journal article" date="2005" name="Proc. Natl. Acad. Sci. U.S.A.">
        <title>Whole genome sequence of Staphylococcus saprophyticus reveals the pathogenesis of uncomplicated urinary tract infection.</title>
        <authorList>
            <person name="Kuroda M."/>
            <person name="Yamashita A."/>
            <person name="Hirakawa H."/>
            <person name="Kumano M."/>
            <person name="Morikawa K."/>
            <person name="Higashide M."/>
            <person name="Maruyama A."/>
            <person name="Inose Y."/>
            <person name="Matoba K."/>
            <person name="Toh H."/>
            <person name="Kuhara S."/>
            <person name="Hattori M."/>
            <person name="Ohta T."/>
        </authorList>
    </citation>
    <scope>NUCLEOTIDE SEQUENCE [LARGE SCALE GENOMIC DNA]</scope>
    <source>
        <strain>ATCC 15305 / DSM 20229 / NCIMB 8711 / NCTC 7292 / S-41</strain>
    </source>
</reference>
<dbReference type="EMBL" id="AP008934">
    <property type="protein sequence ID" value="BAE17650.1"/>
    <property type="molecule type" value="Genomic_DNA"/>
</dbReference>
<dbReference type="RefSeq" id="WP_011302461.1">
    <property type="nucleotide sequence ID" value="NZ_MTGA01000036.1"/>
</dbReference>
<dbReference type="SMR" id="Q49ZX3"/>
<dbReference type="GeneID" id="3614971"/>
<dbReference type="KEGG" id="ssp:SSP0505"/>
<dbReference type="PATRIC" id="fig|342451.11.peg.509"/>
<dbReference type="eggNOG" id="COG1846">
    <property type="taxonomic scope" value="Bacteria"/>
</dbReference>
<dbReference type="HOGENOM" id="CLU_083287_3_2_9"/>
<dbReference type="OrthoDB" id="9806864at2"/>
<dbReference type="Proteomes" id="UP000006371">
    <property type="component" value="Chromosome"/>
</dbReference>
<dbReference type="GO" id="GO:0005737">
    <property type="term" value="C:cytoplasm"/>
    <property type="evidence" value="ECO:0007669"/>
    <property type="project" value="UniProtKB-SubCell"/>
</dbReference>
<dbReference type="GO" id="GO:0003677">
    <property type="term" value="F:DNA binding"/>
    <property type="evidence" value="ECO:0007669"/>
    <property type="project" value="UniProtKB-KW"/>
</dbReference>
<dbReference type="GO" id="GO:0003700">
    <property type="term" value="F:DNA-binding transcription factor activity"/>
    <property type="evidence" value="ECO:0007669"/>
    <property type="project" value="InterPro"/>
</dbReference>
<dbReference type="FunFam" id="1.10.10.10:FF:000163">
    <property type="entry name" value="MarR family transcriptional regulator"/>
    <property type="match status" value="1"/>
</dbReference>
<dbReference type="Gene3D" id="1.10.10.10">
    <property type="entry name" value="Winged helix-like DNA-binding domain superfamily/Winged helix DNA-binding domain"/>
    <property type="match status" value="1"/>
</dbReference>
<dbReference type="InterPro" id="IPR000835">
    <property type="entry name" value="HTH_MarR-typ"/>
</dbReference>
<dbReference type="InterPro" id="IPR055166">
    <property type="entry name" value="Transc_reg_Sar_Rot_HTH"/>
</dbReference>
<dbReference type="InterPro" id="IPR036388">
    <property type="entry name" value="WH-like_DNA-bd_sf"/>
</dbReference>
<dbReference type="InterPro" id="IPR036390">
    <property type="entry name" value="WH_DNA-bd_sf"/>
</dbReference>
<dbReference type="PANTHER" id="PTHR42756">
    <property type="entry name" value="TRANSCRIPTIONAL REGULATOR, MARR"/>
    <property type="match status" value="1"/>
</dbReference>
<dbReference type="PANTHER" id="PTHR42756:SF1">
    <property type="entry name" value="TRANSCRIPTIONAL REPRESSOR OF EMRAB OPERON"/>
    <property type="match status" value="1"/>
</dbReference>
<dbReference type="Pfam" id="PF22381">
    <property type="entry name" value="Staph_reg_Sar_Rot"/>
    <property type="match status" value="1"/>
</dbReference>
<dbReference type="PRINTS" id="PR00598">
    <property type="entry name" value="HTHMARR"/>
</dbReference>
<dbReference type="SMART" id="SM00347">
    <property type="entry name" value="HTH_MARR"/>
    <property type="match status" value="1"/>
</dbReference>
<dbReference type="SUPFAM" id="SSF46785">
    <property type="entry name" value="Winged helix' DNA-binding domain"/>
    <property type="match status" value="1"/>
</dbReference>
<dbReference type="PROSITE" id="PS50995">
    <property type="entry name" value="HTH_MARR_2"/>
    <property type="match status" value="1"/>
</dbReference>
<evidence type="ECO:0000250" key="1"/>
<evidence type="ECO:0000255" key="2">
    <source>
        <dbReference type="PROSITE-ProRule" id="PRU00345"/>
    </source>
</evidence>
<evidence type="ECO:0000305" key="3"/>
<gene>
    <name type="primary">sarZ</name>
    <name type="ordered locus">SSP0505</name>
</gene>
<feature type="chain" id="PRO_0000284466" description="HTH-type transcriptional regulator SarZ">
    <location>
        <begin position="1"/>
        <end position="146"/>
    </location>
</feature>
<feature type="domain" description="HTH marR-type" evidence="2">
    <location>
        <begin position="9"/>
        <end position="139"/>
    </location>
</feature>
<feature type="DNA-binding region" description="H-T-H motif" evidence="2">
    <location>
        <begin position="55"/>
        <end position="78"/>
    </location>
</feature>
<comment type="subcellular location">
    <subcellularLocation>
        <location evidence="1">Cytoplasm</location>
    </subcellularLocation>
</comment>
<comment type="similarity">
    <text evidence="3">Belongs to the SarZ family.</text>
</comment>
<name>SARZ_STAS1</name>
<organism>
    <name type="scientific">Staphylococcus saprophyticus subsp. saprophyticus (strain ATCC 15305 / DSM 20229 / NCIMB 8711 / NCTC 7292 / S-41)</name>
    <dbReference type="NCBI Taxonomy" id="342451"/>
    <lineage>
        <taxon>Bacteria</taxon>
        <taxon>Bacillati</taxon>
        <taxon>Bacillota</taxon>
        <taxon>Bacilli</taxon>
        <taxon>Bacillales</taxon>
        <taxon>Staphylococcaceae</taxon>
        <taxon>Staphylococcus</taxon>
    </lineage>
</organism>
<accession>Q49ZX3</accession>